<accession>P0C9U8</accession>
<comment type="function">
    <text evidence="1">Plays a role in virus cell tropism, and may be required for efficient virus replication in macrophages.</text>
</comment>
<comment type="induction">
    <text evidence="2">Expressed in the early phase of the viral replicative cycle.</text>
</comment>
<comment type="similarity">
    <text evidence="2">Belongs to the asfivirus MGF 505 family.</text>
</comment>
<name>5059R_ASFP4</name>
<proteinExistence type="inferred from homology"/>
<protein>
    <recommendedName>
        <fullName>Protein MGF 505-9R</fullName>
    </recommendedName>
</protein>
<gene>
    <name type="ordered locus">Pret-044</name>
</gene>
<dbReference type="EMBL" id="AY261363">
    <property type="status" value="NOT_ANNOTATED_CDS"/>
    <property type="molecule type" value="Genomic_DNA"/>
</dbReference>
<dbReference type="SMR" id="P0C9U8"/>
<dbReference type="Proteomes" id="UP000000859">
    <property type="component" value="Segment"/>
</dbReference>
<dbReference type="InterPro" id="IPR036770">
    <property type="entry name" value="Ankyrin_rpt-contain_sf"/>
</dbReference>
<dbReference type="InterPro" id="IPR004858">
    <property type="entry name" value="MGF_505"/>
</dbReference>
<dbReference type="Pfam" id="PF03158">
    <property type="entry name" value="DUF249"/>
    <property type="match status" value="1"/>
</dbReference>
<dbReference type="SUPFAM" id="SSF48403">
    <property type="entry name" value="Ankyrin repeat"/>
    <property type="match status" value="1"/>
</dbReference>
<organism>
    <name type="scientific">African swine fever virus (isolate Tick/South Africa/Pretoriuskop Pr4/1996)</name>
    <name type="common">ASFV</name>
    <dbReference type="NCBI Taxonomy" id="561443"/>
    <lineage>
        <taxon>Viruses</taxon>
        <taxon>Varidnaviria</taxon>
        <taxon>Bamfordvirae</taxon>
        <taxon>Nucleocytoviricota</taxon>
        <taxon>Pokkesviricetes</taxon>
        <taxon>Asfuvirales</taxon>
        <taxon>Asfarviridae</taxon>
        <taxon>Asfivirus</taxon>
        <taxon>African swine fever virus</taxon>
    </lineage>
</organism>
<keyword id="KW-0244">Early protein</keyword>
<evidence type="ECO:0000250" key="1">
    <source>
        <dbReference type="UniProtKB" id="Q89740"/>
    </source>
</evidence>
<evidence type="ECO:0000305" key="2"/>
<feature type="chain" id="PRO_0000373347" description="Protein MGF 505-9R">
    <location>
        <begin position="1"/>
        <end position="506"/>
    </location>
</feature>
<reference key="1">
    <citation type="submission" date="2003-03" db="EMBL/GenBank/DDBJ databases">
        <title>African swine fever virus genomes.</title>
        <authorList>
            <person name="Kutish G.F."/>
            <person name="Rock D.L."/>
        </authorList>
    </citation>
    <scope>NUCLEOTIDE SEQUENCE [LARGE SCALE GENOMIC DNA]</scope>
</reference>
<sequence length="506" mass="59290">MFSLQDLCRKNLFLPLEPLGKHVVQRLGLYWEGHGSVKRVGDCFICVDQIWILSIHKAVQIAASEGNEDIVKLFLLWKGSLQYAIIGALEGRQYDLIQKYYNQIGDCHQILPLIQDPEIYERCHELNVTCTFQCLFQHAIRDNMLPIFQKYGEDLNGNRGMVQLLYEMACRLQNYDIIKWIGFNLHVYNLEAIFSIAFVRKDLTLYSLGYMLLLDRMSTVDRNFISIITRHLEYASKKGLFDFVLESLKYGGQVDTVLFQAVKYNHRKILAHFIHEIPRETVEKLILHAVESRASRKTFNLLLSSINYCVNPFVKKLLHAVVKHKYMLIIKLLLERPKKKINLVDAALFKLVKYSTYKEIVKYMDEFSVDPKRVVKMAARLMRVDLIKKISNDAWEDKLERIKHLKQMVNTMNHRNGKNLLMYNIHNITGYTHLNTKEAFNLTKFYAVHNATCLFKEMCKSCFEHDKIQLRELLEDCLHIANRHAYIQIAETADECIKYIDLITPK</sequence>
<organismHost>
    <name type="scientific">Ornithodoros</name>
    <name type="common">relapsing fever ticks</name>
    <dbReference type="NCBI Taxonomy" id="6937"/>
</organismHost>
<organismHost>
    <name type="scientific">Phacochoerus aethiopicus</name>
    <name type="common">Warthog</name>
    <dbReference type="NCBI Taxonomy" id="85517"/>
</organismHost>
<organismHost>
    <name type="scientific">Phacochoerus africanus</name>
    <name type="common">Warthog</name>
    <dbReference type="NCBI Taxonomy" id="41426"/>
</organismHost>
<organismHost>
    <name type="scientific">Potamochoerus larvatus</name>
    <name type="common">Bushpig</name>
    <dbReference type="NCBI Taxonomy" id="273792"/>
</organismHost>
<organismHost>
    <name type="scientific">Sus scrofa</name>
    <name type="common">Pig</name>
    <dbReference type="NCBI Taxonomy" id="9823"/>
</organismHost>